<name>RS9_CLOTE</name>
<proteinExistence type="inferred from homology"/>
<reference key="1">
    <citation type="journal article" date="2003" name="Proc. Natl. Acad. Sci. U.S.A.">
        <title>The genome sequence of Clostridium tetani, the causative agent of tetanus disease.</title>
        <authorList>
            <person name="Brueggemann H."/>
            <person name="Baeumer S."/>
            <person name="Fricke W.F."/>
            <person name="Wiezer A."/>
            <person name="Liesegang H."/>
            <person name="Decker I."/>
            <person name="Herzberg C."/>
            <person name="Martinez-Arias R."/>
            <person name="Merkl R."/>
            <person name="Henne A."/>
            <person name="Gottschalk G."/>
        </authorList>
    </citation>
    <scope>NUCLEOTIDE SEQUENCE [LARGE SCALE GENOMIC DNA]</scope>
    <source>
        <strain>Massachusetts / E88</strain>
    </source>
</reference>
<sequence>MAKVQYYGTGRRKKSIARVRLVPGEGKVLINKRDEEEYFGLETLRVIVNQPLVLTGTKDKFDVLVNVYGGGLTGQAGAIRHGISRALLKADESLRPELKKAGFLTRDPRMKERKKYGLKKARRAPQFSKR</sequence>
<accession>Q890R7</accession>
<keyword id="KW-1185">Reference proteome</keyword>
<keyword id="KW-0687">Ribonucleoprotein</keyword>
<keyword id="KW-0689">Ribosomal protein</keyword>
<comment type="similarity">
    <text evidence="1">Belongs to the universal ribosomal protein uS9 family.</text>
</comment>
<dbReference type="EMBL" id="AE015927">
    <property type="protein sequence ID" value="AAO37028.1"/>
    <property type="molecule type" value="Genomic_DNA"/>
</dbReference>
<dbReference type="RefSeq" id="WP_011100689.1">
    <property type="nucleotide sequence ID" value="NC_004557.1"/>
</dbReference>
<dbReference type="SMR" id="Q890R7"/>
<dbReference type="STRING" id="212717.CTC_02571"/>
<dbReference type="GeneID" id="24254843"/>
<dbReference type="KEGG" id="ctc:CTC_02571"/>
<dbReference type="HOGENOM" id="CLU_046483_2_1_9"/>
<dbReference type="OrthoDB" id="9803965at2"/>
<dbReference type="Proteomes" id="UP000001412">
    <property type="component" value="Chromosome"/>
</dbReference>
<dbReference type="GO" id="GO:0022627">
    <property type="term" value="C:cytosolic small ribosomal subunit"/>
    <property type="evidence" value="ECO:0007669"/>
    <property type="project" value="TreeGrafter"/>
</dbReference>
<dbReference type="GO" id="GO:0003723">
    <property type="term" value="F:RNA binding"/>
    <property type="evidence" value="ECO:0007669"/>
    <property type="project" value="TreeGrafter"/>
</dbReference>
<dbReference type="GO" id="GO:0003735">
    <property type="term" value="F:structural constituent of ribosome"/>
    <property type="evidence" value="ECO:0007669"/>
    <property type="project" value="InterPro"/>
</dbReference>
<dbReference type="GO" id="GO:0006412">
    <property type="term" value="P:translation"/>
    <property type="evidence" value="ECO:0007669"/>
    <property type="project" value="UniProtKB-UniRule"/>
</dbReference>
<dbReference type="FunFam" id="3.30.230.10:FF:000001">
    <property type="entry name" value="30S ribosomal protein S9"/>
    <property type="match status" value="1"/>
</dbReference>
<dbReference type="Gene3D" id="3.30.230.10">
    <property type="match status" value="1"/>
</dbReference>
<dbReference type="HAMAP" id="MF_00532_B">
    <property type="entry name" value="Ribosomal_uS9_B"/>
    <property type="match status" value="1"/>
</dbReference>
<dbReference type="InterPro" id="IPR020568">
    <property type="entry name" value="Ribosomal_Su5_D2-typ_SF"/>
</dbReference>
<dbReference type="InterPro" id="IPR000754">
    <property type="entry name" value="Ribosomal_uS9"/>
</dbReference>
<dbReference type="InterPro" id="IPR023035">
    <property type="entry name" value="Ribosomal_uS9_bac/plastid"/>
</dbReference>
<dbReference type="InterPro" id="IPR020574">
    <property type="entry name" value="Ribosomal_uS9_CS"/>
</dbReference>
<dbReference type="InterPro" id="IPR014721">
    <property type="entry name" value="Ribsml_uS5_D2-typ_fold_subgr"/>
</dbReference>
<dbReference type="NCBIfam" id="NF001099">
    <property type="entry name" value="PRK00132.1"/>
    <property type="match status" value="1"/>
</dbReference>
<dbReference type="PANTHER" id="PTHR21569">
    <property type="entry name" value="RIBOSOMAL PROTEIN S9"/>
    <property type="match status" value="1"/>
</dbReference>
<dbReference type="PANTHER" id="PTHR21569:SF1">
    <property type="entry name" value="SMALL RIBOSOMAL SUBUNIT PROTEIN US9M"/>
    <property type="match status" value="1"/>
</dbReference>
<dbReference type="Pfam" id="PF00380">
    <property type="entry name" value="Ribosomal_S9"/>
    <property type="match status" value="1"/>
</dbReference>
<dbReference type="SUPFAM" id="SSF54211">
    <property type="entry name" value="Ribosomal protein S5 domain 2-like"/>
    <property type="match status" value="1"/>
</dbReference>
<dbReference type="PROSITE" id="PS00360">
    <property type="entry name" value="RIBOSOMAL_S9"/>
    <property type="match status" value="1"/>
</dbReference>
<evidence type="ECO:0000255" key="1">
    <source>
        <dbReference type="HAMAP-Rule" id="MF_00532"/>
    </source>
</evidence>
<evidence type="ECO:0000256" key="2">
    <source>
        <dbReference type="SAM" id="MobiDB-lite"/>
    </source>
</evidence>
<evidence type="ECO:0000305" key="3"/>
<organism>
    <name type="scientific">Clostridium tetani (strain Massachusetts / E88)</name>
    <dbReference type="NCBI Taxonomy" id="212717"/>
    <lineage>
        <taxon>Bacteria</taxon>
        <taxon>Bacillati</taxon>
        <taxon>Bacillota</taxon>
        <taxon>Clostridia</taxon>
        <taxon>Eubacteriales</taxon>
        <taxon>Clostridiaceae</taxon>
        <taxon>Clostridium</taxon>
    </lineage>
</organism>
<feature type="chain" id="PRO_0000111349" description="Small ribosomal subunit protein uS9">
    <location>
        <begin position="1"/>
        <end position="130"/>
    </location>
</feature>
<feature type="region of interest" description="Disordered" evidence="2">
    <location>
        <begin position="101"/>
        <end position="130"/>
    </location>
</feature>
<feature type="compositionally biased region" description="Basic and acidic residues" evidence="2">
    <location>
        <begin position="101"/>
        <end position="110"/>
    </location>
</feature>
<feature type="compositionally biased region" description="Basic residues" evidence="2">
    <location>
        <begin position="111"/>
        <end position="130"/>
    </location>
</feature>
<gene>
    <name evidence="1" type="primary">rpsI</name>
    <name type="ordered locus">CTC_02571</name>
</gene>
<protein>
    <recommendedName>
        <fullName evidence="1">Small ribosomal subunit protein uS9</fullName>
    </recommendedName>
    <alternativeName>
        <fullName evidence="3">30S ribosomal protein S9</fullName>
    </alternativeName>
</protein>